<dbReference type="EC" id="1.13.11.89" evidence="2"/>
<dbReference type="EMBL" id="ABCE01000018">
    <property type="protein sequence ID" value="EDL59073.1"/>
    <property type="molecule type" value="Genomic_DNA"/>
</dbReference>
<dbReference type="RefSeq" id="WP_002646829.1">
    <property type="nucleotide sequence ID" value="NZ_ABCE01000018.1"/>
</dbReference>
<dbReference type="SMR" id="P0DX12"/>
<dbReference type="GeneID" id="98645008"/>
<dbReference type="OrthoDB" id="823268at2"/>
<dbReference type="GO" id="GO:0046872">
    <property type="term" value="F:metal ion binding"/>
    <property type="evidence" value="ECO:0007669"/>
    <property type="project" value="UniProtKB-KW"/>
</dbReference>
<dbReference type="GO" id="GO:0016491">
    <property type="term" value="F:oxidoreductase activity"/>
    <property type="evidence" value="ECO:0007669"/>
    <property type="project" value="UniProtKB-KW"/>
</dbReference>
<dbReference type="Gene3D" id="1.10.3210.10">
    <property type="entry name" value="Hypothetical protein af1432"/>
    <property type="match status" value="1"/>
</dbReference>
<dbReference type="InterPro" id="IPR006674">
    <property type="entry name" value="HD_domain"/>
</dbReference>
<dbReference type="InterPro" id="IPR052567">
    <property type="entry name" value="OP_Dioxygenase"/>
</dbReference>
<dbReference type="PANTHER" id="PTHR40202">
    <property type="match status" value="1"/>
</dbReference>
<dbReference type="PANTHER" id="PTHR40202:SF1">
    <property type="entry name" value="HD DOMAIN-CONTAINING PROTEIN"/>
    <property type="match status" value="1"/>
</dbReference>
<dbReference type="Pfam" id="PF01966">
    <property type="entry name" value="HD"/>
    <property type="match status" value="1"/>
</dbReference>
<dbReference type="SUPFAM" id="SSF109604">
    <property type="entry name" value="HD-domain/PDEase-like"/>
    <property type="match status" value="1"/>
</dbReference>
<accession>P0DX12</accession>
<comment type="function">
    <text evidence="2">Part of an oxidative pathway for utilization of methylphosphonic acid as a phosphate source (PubMed:30810303). Catalyzes the oxidation of hydroxymethylphosphonic acid to produce formate and phosphate (PubMed:30810303). Can also use (1R)-(2-amino-1-hydroxyethyl)phosphonic acid and (R)-1-hydroxyethylphosphonic acid with similar catalytic efficiency (PubMed:30810303).</text>
</comment>
<comment type="catalytic activity">
    <reaction evidence="2">
        <text>hydroxymethylphosphonate + O2 = formate + phosphate + 2 H(+)</text>
        <dbReference type="Rhea" id="RHEA:60000"/>
        <dbReference type="ChEBI" id="CHEBI:15378"/>
        <dbReference type="ChEBI" id="CHEBI:15379"/>
        <dbReference type="ChEBI" id="CHEBI:15740"/>
        <dbReference type="ChEBI" id="CHEBI:43474"/>
        <dbReference type="ChEBI" id="CHEBI:71199"/>
        <dbReference type="EC" id="1.13.11.89"/>
    </reaction>
    <physiologicalReaction direction="left-to-right" evidence="2">
        <dbReference type="Rhea" id="RHEA:60001"/>
    </physiologicalReaction>
</comment>
<comment type="catalytic activity">
    <reaction evidence="2">
        <text>(1R)-(2-amino-1-hydroxyethyl)phosphonate + O2 = glycine + phosphate + 2 H(+)</text>
        <dbReference type="Rhea" id="RHEA:41444"/>
        <dbReference type="ChEBI" id="CHEBI:15378"/>
        <dbReference type="ChEBI" id="CHEBI:15379"/>
        <dbReference type="ChEBI" id="CHEBI:43474"/>
        <dbReference type="ChEBI" id="CHEBI:57305"/>
        <dbReference type="ChEBI" id="CHEBI:141612"/>
    </reaction>
</comment>
<comment type="catalytic activity">
    <reaction evidence="2">
        <text>(1R)-(1-hydroxyethyl)phosphonate + O2 = acetate + phosphate + 2 H(+)</text>
        <dbReference type="Rhea" id="RHEA:75123"/>
        <dbReference type="ChEBI" id="CHEBI:15378"/>
        <dbReference type="ChEBI" id="CHEBI:15379"/>
        <dbReference type="ChEBI" id="CHEBI:30089"/>
        <dbReference type="ChEBI" id="CHEBI:43474"/>
        <dbReference type="ChEBI" id="CHEBI:194177"/>
    </reaction>
</comment>
<comment type="cofactor">
    <cofactor evidence="2">
        <name>Fe(2+)</name>
        <dbReference type="ChEBI" id="CHEBI:29033"/>
    </cofactor>
    <text evidence="1">Binds 2 iron ions per subunit.</text>
</comment>
<comment type="biophysicochemical properties">
    <kinetics>
        <KM evidence="2">26 uM for hydroxymethylphosphonate</KM>
        <KM evidence="2">130 uM for (R)-2-amino-1-hydroxyethylphosphonic acid</KM>
        <KM evidence="2">280 uM for (R)-1-hydroxyethylphosphonic acid</KM>
        <KM evidence="2">10 uM for Fe(2+)</KM>
        <text evidence="2">kcat is 0.55 sec(-1) with hydroxymethylphosphonate as substrate. kcat is 2.5 sec(-1) with (R)-2-amino-1-hydroxyethylphosphonic acid as substrate. kcat is 1.54 sec(-1) with (R)-1-hydroxyethylphosphonic acid as substrate.</text>
    </kinetics>
</comment>
<feature type="chain" id="PRO_0000457714" description="Hydroxymethylphosphonate dioxygenase">
    <location>
        <begin position="1"/>
        <end position="201"/>
    </location>
</feature>
<feature type="binding site" evidence="1">
    <location>
        <position position="47"/>
    </location>
    <ligand>
        <name>Fe cation</name>
        <dbReference type="ChEBI" id="CHEBI:24875"/>
        <label>1</label>
    </ligand>
</feature>
<feature type="binding site" evidence="1">
    <location>
        <position position="71"/>
    </location>
    <ligand>
        <name>Fe cation</name>
        <dbReference type="ChEBI" id="CHEBI:24875"/>
        <label>1</label>
    </ligand>
</feature>
<feature type="binding site" evidence="1">
    <location>
        <position position="72"/>
    </location>
    <ligand>
        <name>Fe cation</name>
        <dbReference type="ChEBI" id="CHEBI:24875"/>
        <label>1</label>
    </ligand>
</feature>
<feature type="binding site" evidence="1">
    <location>
        <position position="72"/>
    </location>
    <ligand>
        <name>Fe cation</name>
        <dbReference type="ChEBI" id="CHEBI:24875"/>
        <label>2</label>
    </ligand>
</feature>
<feature type="binding site" evidence="1">
    <location>
        <position position="94"/>
    </location>
    <ligand>
        <name>Fe cation</name>
        <dbReference type="ChEBI" id="CHEBI:24875"/>
        <label>2</label>
    </ligand>
</feature>
<feature type="binding site" evidence="1">
    <location>
        <position position="117"/>
    </location>
    <ligand>
        <name>Fe cation</name>
        <dbReference type="ChEBI" id="CHEBI:24875"/>
        <label>2</label>
    </ligand>
</feature>
<feature type="binding site" evidence="1">
    <location>
        <position position="174"/>
    </location>
    <ligand>
        <name>Fe cation</name>
        <dbReference type="ChEBI" id="CHEBI:24875"/>
        <label>1</label>
    </ligand>
</feature>
<evidence type="ECO:0000250" key="1">
    <source>
        <dbReference type="UniProtKB" id="D0E8I5"/>
    </source>
</evidence>
<evidence type="ECO:0000269" key="2">
    <source>
    </source>
</evidence>
<evidence type="ECO:0000303" key="3">
    <source>
    </source>
</evidence>
<evidence type="ECO:0000305" key="4"/>
<evidence type="ECO:0000312" key="5">
    <source>
        <dbReference type="EMBL" id="EDL59073.1"/>
    </source>
</evidence>
<reference key="1">
    <citation type="submission" date="2007-06" db="EMBL/GenBank/DDBJ databases">
        <authorList>
            <person name="Amann R."/>
            <person name="Ferriera S."/>
            <person name="Johnson J."/>
            <person name="Kravitz S."/>
            <person name="Beeson K."/>
            <person name="Sutton G."/>
            <person name="Rogers Y.-H."/>
            <person name="Friedman R."/>
            <person name="Frazier M."/>
            <person name="Venter J.C."/>
        </authorList>
    </citation>
    <scope>NUCLEOTIDE SEQUENCE [LARGE SCALE GENOMIC DNA]</scope>
    <source>
        <strain>ATCC 29201 / DSM 8797 / 534-30</strain>
    </source>
</reference>
<reference key="2">
    <citation type="journal article" date="2019" name="ACS Chem. Biol.">
        <title>An oxidative pathway for microbial utilization of methylphosphonic acid as a phosphate source.</title>
        <authorList>
            <person name="Gama S.R."/>
            <person name="Vogt M."/>
            <person name="Kalina T."/>
            <person name="Hupp K."/>
            <person name="Hammerschmidt F."/>
            <person name="Pallitsch K."/>
            <person name="Zechel D.L."/>
        </authorList>
    </citation>
    <scope>FUNCTION</scope>
    <scope>CATALYTIC ACTIVITY</scope>
    <scope>COFACTOR</scope>
    <scope>BIOPHYSICOCHEMICAL PROPERTIES</scope>
    <source>
        <strain>ATCC 29201 / DSM 8797 / 534-30</strain>
    </source>
</reference>
<organism>
    <name type="scientific">Gimesia maris (strain ATCC 29201 / DSM 8797 / 534-30)</name>
    <name type="common">Planctomyces maris</name>
    <dbReference type="NCBI Taxonomy" id="344747"/>
    <lineage>
        <taxon>Bacteria</taxon>
        <taxon>Pseudomonadati</taxon>
        <taxon>Planctomycetota</taxon>
        <taxon>Planctomycetia</taxon>
        <taxon>Planctomycetales</taxon>
        <taxon>Planctomycetaceae</taxon>
        <taxon>Gimesia</taxon>
    </lineage>
</organism>
<keyword id="KW-0408">Iron</keyword>
<keyword id="KW-0479">Metal-binding</keyword>
<keyword id="KW-0560">Oxidoreductase</keyword>
<proteinExistence type="evidence at protein level"/>
<name>PHNZ1_GIMM8</name>
<gene>
    <name evidence="3" type="primary">phnZ1</name>
    <name evidence="5" type="ORF">PM8797T_07614</name>
</gene>
<protein>
    <recommendedName>
        <fullName evidence="4">Hydroxymethylphosphonate dioxygenase</fullName>
        <ecNumber evidence="2">1.13.11.89</ecNumber>
    </recommendedName>
    <alternativeName>
        <fullName evidence="3">GmPhnZ1</fullName>
    </alternativeName>
</protein>
<sequence>MNEKIELSLCDVLSLSKTPGERVTSLFELMQDHGQSFYDESVTQLEHALQAAHLAKTSHATMEQITAALLHDIGHFLMDEHDEQNHFLAEDWQHETVGAQQLAPFFGKAVTEPIFLHVPAKRYLCSVNADYFNGLSRASQRSYELQGGLMTDAEIAEFEQNPFHHTAVLLRRWDDGAKVKGLKVPDLQEYHTEVESCLEHS</sequence>